<feature type="chain" id="PRO_0000179319" description="Trigger factor">
    <location>
        <begin position="1"/>
        <end position="454"/>
    </location>
</feature>
<feature type="domain" description="PPIase FKBP-type">
    <location>
        <begin position="170"/>
        <end position="256"/>
    </location>
</feature>
<evidence type="ECO:0000250" key="1"/>
<evidence type="ECO:0000305" key="2"/>
<comment type="function">
    <text evidence="1">Involved in protein export. Acts as a chaperone by maintaining the newly synthesized protein in an open conformation. Functions as a peptidyl-prolyl cis-trans isomerase (By similarity).</text>
</comment>
<comment type="catalytic activity">
    <reaction>
        <text>[protein]-peptidylproline (omega=180) = [protein]-peptidylproline (omega=0)</text>
        <dbReference type="Rhea" id="RHEA:16237"/>
        <dbReference type="Rhea" id="RHEA-COMP:10747"/>
        <dbReference type="Rhea" id="RHEA-COMP:10748"/>
        <dbReference type="ChEBI" id="CHEBI:83833"/>
        <dbReference type="ChEBI" id="CHEBI:83834"/>
        <dbReference type="EC" id="5.2.1.8"/>
    </reaction>
</comment>
<comment type="subcellular location">
    <subcellularLocation>
        <location>Cytoplasm</location>
    </subcellularLocation>
    <text evidence="1">About half TF is bound to the ribosome near the polypeptide exit tunnel while the other half is free in the cytoplasm.</text>
</comment>
<comment type="domain">
    <text evidence="1">Consists of 3 domains; the N-terminus binds the ribosome, the middle domain has PPIase activity, while the C-terminus has intrinsic chaperone activity on its own.</text>
</comment>
<comment type="similarity">
    <text evidence="2">Belongs to the FKBP-type PPIase family. Tig subfamily.</text>
</comment>
<dbReference type="EC" id="5.2.1.8"/>
<dbReference type="EMBL" id="AE000783">
    <property type="protein sequence ID" value="AAC66965.1"/>
    <property type="molecule type" value="Genomic_DNA"/>
</dbReference>
<dbReference type="PIR" id="A70176">
    <property type="entry name" value="A70176"/>
</dbReference>
<dbReference type="RefSeq" id="NP_212744.1">
    <property type="nucleotide sequence ID" value="NC_001318.1"/>
</dbReference>
<dbReference type="RefSeq" id="WP_010889779.1">
    <property type="nucleotide sequence ID" value="NC_001318.1"/>
</dbReference>
<dbReference type="SMR" id="O51555"/>
<dbReference type="STRING" id="224326.BB_0610"/>
<dbReference type="PaxDb" id="224326-BB_0610"/>
<dbReference type="EnsemblBacteria" id="AAC66965">
    <property type="protein sequence ID" value="AAC66965"/>
    <property type="gene ID" value="BB_0610"/>
</dbReference>
<dbReference type="KEGG" id="bbu:BB_0610"/>
<dbReference type="PATRIC" id="fig|224326.49.peg.1000"/>
<dbReference type="HOGENOM" id="CLU_033058_3_1_12"/>
<dbReference type="OrthoDB" id="9767721at2"/>
<dbReference type="Proteomes" id="UP000001807">
    <property type="component" value="Chromosome"/>
</dbReference>
<dbReference type="GO" id="GO:0005737">
    <property type="term" value="C:cytoplasm"/>
    <property type="evidence" value="ECO:0007669"/>
    <property type="project" value="UniProtKB-SubCell"/>
</dbReference>
<dbReference type="GO" id="GO:0003755">
    <property type="term" value="F:peptidyl-prolyl cis-trans isomerase activity"/>
    <property type="evidence" value="ECO:0007669"/>
    <property type="project" value="UniProtKB-UniRule"/>
</dbReference>
<dbReference type="GO" id="GO:0044183">
    <property type="term" value="F:protein folding chaperone"/>
    <property type="evidence" value="ECO:0007669"/>
    <property type="project" value="TreeGrafter"/>
</dbReference>
<dbReference type="GO" id="GO:0043022">
    <property type="term" value="F:ribosome binding"/>
    <property type="evidence" value="ECO:0007669"/>
    <property type="project" value="TreeGrafter"/>
</dbReference>
<dbReference type="GO" id="GO:0051083">
    <property type="term" value="P:'de novo' cotranslational protein folding"/>
    <property type="evidence" value="ECO:0007669"/>
    <property type="project" value="TreeGrafter"/>
</dbReference>
<dbReference type="GO" id="GO:0051301">
    <property type="term" value="P:cell division"/>
    <property type="evidence" value="ECO:0007669"/>
    <property type="project" value="UniProtKB-KW"/>
</dbReference>
<dbReference type="GO" id="GO:0061077">
    <property type="term" value="P:chaperone-mediated protein folding"/>
    <property type="evidence" value="ECO:0007669"/>
    <property type="project" value="TreeGrafter"/>
</dbReference>
<dbReference type="GO" id="GO:0015031">
    <property type="term" value="P:protein transport"/>
    <property type="evidence" value="ECO:0007669"/>
    <property type="project" value="UniProtKB-UniRule"/>
</dbReference>
<dbReference type="GO" id="GO:0043335">
    <property type="term" value="P:protein unfolding"/>
    <property type="evidence" value="ECO:0007669"/>
    <property type="project" value="TreeGrafter"/>
</dbReference>
<dbReference type="Gene3D" id="3.10.50.40">
    <property type="match status" value="1"/>
</dbReference>
<dbReference type="Gene3D" id="3.30.70.1050">
    <property type="entry name" value="Trigger factor ribosome-binding domain"/>
    <property type="match status" value="1"/>
</dbReference>
<dbReference type="Gene3D" id="1.10.3120.10">
    <property type="entry name" value="Trigger factor, C-terminal domain"/>
    <property type="match status" value="1"/>
</dbReference>
<dbReference type="HAMAP" id="MF_00303">
    <property type="entry name" value="Trigger_factor_Tig"/>
    <property type="match status" value="1"/>
</dbReference>
<dbReference type="InterPro" id="IPR046357">
    <property type="entry name" value="PPIase_dom_sf"/>
</dbReference>
<dbReference type="InterPro" id="IPR005215">
    <property type="entry name" value="Trig_fac"/>
</dbReference>
<dbReference type="InterPro" id="IPR008880">
    <property type="entry name" value="Trigger_fac_C"/>
</dbReference>
<dbReference type="InterPro" id="IPR037041">
    <property type="entry name" value="Trigger_fac_C_sf"/>
</dbReference>
<dbReference type="InterPro" id="IPR008881">
    <property type="entry name" value="Trigger_fac_ribosome-bd_bac"/>
</dbReference>
<dbReference type="InterPro" id="IPR036611">
    <property type="entry name" value="Trigger_fac_ribosome-bd_sf"/>
</dbReference>
<dbReference type="InterPro" id="IPR027304">
    <property type="entry name" value="Trigger_fact/SurA_dom_sf"/>
</dbReference>
<dbReference type="NCBIfam" id="TIGR00115">
    <property type="entry name" value="tig"/>
    <property type="match status" value="1"/>
</dbReference>
<dbReference type="PANTHER" id="PTHR30560">
    <property type="entry name" value="TRIGGER FACTOR CHAPERONE AND PEPTIDYL-PROLYL CIS/TRANS ISOMERASE"/>
    <property type="match status" value="1"/>
</dbReference>
<dbReference type="PANTHER" id="PTHR30560:SF3">
    <property type="entry name" value="TRIGGER FACTOR-LIKE PROTEIN TIG, CHLOROPLASTIC"/>
    <property type="match status" value="1"/>
</dbReference>
<dbReference type="Pfam" id="PF05698">
    <property type="entry name" value="Trigger_C"/>
    <property type="match status" value="1"/>
</dbReference>
<dbReference type="Pfam" id="PF05697">
    <property type="entry name" value="Trigger_N"/>
    <property type="match status" value="1"/>
</dbReference>
<dbReference type="PIRSF" id="PIRSF003095">
    <property type="entry name" value="Trigger_factor"/>
    <property type="match status" value="1"/>
</dbReference>
<dbReference type="SUPFAM" id="SSF54534">
    <property type="entry name" value="FKBP-like"/>
    <property type="match status" value="1"/>
</dbReference>
<dbReference type="SUPFAM" id="SSF109998">
    <property type="entry name" value="Triger factor/SurA peptide-binding domain-like"/>
    <property type="match status" value="1"/>
</dbReference>
<dbReference type="SUPFAM" id="SSF102735">
    <property type="entry name" value="Trigger factor ribosome-binding domain"/>
    <property type="match status" value="1"/>
</dbReference>
<sequence length="454" mass="52906">MILSKDIKLLPGSKVEVVIRVSKNVIQEKYNSLLQDYSSRLKIQGFRIGKVPINVIENKYSEGLKATVLEEVINNSFKEFFKEESKIPLSYATPTVKEKNLKLNLDKDFEFTFTYETYPEFKIPSFDEIDIKVEIPEVFIDDSDIDDEIKNLQIENSIIIEDEEGVVKEDSIVKVDFVELDDLSNEIVSTKRQGFVFTVGKSETYYDFDKDVIGMRINEERVIEKSYIADYKFEELAGSSRKLKIKIKSIKKRDLPLIDDEFAQDISDKYNTLDDLKNFIRSSLLNIVEEKKETLKLNKFFSTISEKLEIDIPHSMIEAEIEIAFKDAKRQNKNNMSLEEFKSIFYSSGYIGGDNLKDEILGNLKSKLIMQKMVDLDPIKVTESDVEDEMARQSKNLGVSYEEIKKFYEDQNLISYLKDDIKRERAKKKILENLKEVKGKKLNFRDFVNYKICE</sequence>
<keyword id="KW-0131">Cell cycle</keyword>
<keyword id="KW-0132">Cell division</keyword>
<keyword id="KW-0143">Chaperone</keyword>
<keyword id="KW-0963">Cytoplasm</keyword>
<keyword id="KW-0413">Isomerase</keyword>
<keyword id="KW-1185">Reference proteome</keyword>
<keyword id="KW-0697">Rotamase</keyword>
<protein>
    <recommendedName>
        <fullName>Trigger factor</fullName>
        <shortName>TF</shortName>
        <ecNumber>5.2.1.8</ecNumber>
    </recommendedName>
    <alternativeName>
        <fullName>PPIase</fullName>
    </alternativeName>
</protein>
<organism>
    <name type="scientific">Borreliella burgdorferi (strain ATCC 35210 / DSM 4680 / CIP 102532 / B31)</name>
    <name type="common">Borrelia burgdorferi</name>
    <dbReference type="NCBI Taxonomy" id="224326"/>
    <lineage>
        <taxon>Bacteria</taxon>
        <taxon>Pseudomonadati</taxon>
        <taxon>Spirochaetota</taxon>
        <taxon>Spirochaetia</taxon>
        <taxon>Spirochaetales</taxon>
        <taxon>Borreliaceae</taxon>
        <taxon>Borreliella</taxon>
    </lineage>
</organism>
<name>TIG_BORBU</name>
<proteinExistence type="inferred from homology"/>
<reference key="1">
    <citation type="journal article" date="1997" name="Nature">
        <title>Genomic sequence of a Lyme disease spirochaete, Borrelia burgdorferi.</title>
        <authorList>
            <person name="Fraser C.M."/>
            <person name="Casjens S."/>
            <person name="Huang W.M."/>
            <person name="Sutton G.G."/>
            <person name="Clayton R.A."/>
            <person name="Lathigra R."/>
            <person name="White O."/>
            <person name="Ketchum K.A."/>
            <person name="Dodson R.J."/>
            <person name="Hickey E.K."/>
            <person name="Gwinn M.L."/>
            <person name="Dougherty B.A."/>
            <person name="Tomb J.-F."/>
            <person name="Fleischmann R.D."/>
            <person name="Richardson D.L."/>
            <person name="Peterson J.D."/>
            <person name="Kerlavage A.R."/>
            <person name="Quackenbush J."/>
            <person name="Salzberg S.L."/>
            <person name="Hanson M."/>
            <person name="van Vugt R."/>
            <person name="Palmer N."/>
            <person name="Adams M.D."/>
            <person name="Gocayne J.D."/>
            <person name="Weidman J.F."/>
            <person name="Utterback T.R."/>
            <person name="Watthey L."/>
            <person name="McDonald L.A."/>
            <person name="Artiach P."/>
            <person name="Bowman C."/>
            <person name="Garland S.A."/>
            <person name="Fujii C."/>
            <person name="Cotton M.D."/>
            <person name="Horst K."/>
            <person name="Roberts K.M."/>
            <person name="Hatch B."/>
            <person name="Smith H.O."/>
            <person name="Venter J.C."/>
        </authorList>
    </citation>
    <scope>NUCLEOTIDE SEQUENCE [LARGE SCALE GENOMIC DNA]</scope>
    <source>
        <strain>ATCC 35210 / DSM 4680 / CIP 102532 / B31</strain>
    </source>
</reference>
<gene>
    <name type="primary">tig</name>
    <name type="ordered locus">BB_0610</name>
</gene>
<accession>O51555</accession>